<accession>Q2JWN9</accession>
<keyword id="KW-0143">Chaperone</keyword>
<keyword id="KW-0963">Cytoplasm</keyword>
<keyword id="KW-0533">Nickel</keyword>
<name>UREE_SYNJA</name>
<evidence type="ECO:0000255" key="1">
    <source>
        <dbReference type="HAMAP-Rule" id="MF_00822"/>
    </source>
</evidence>
<comment type="function">
    <text evidence="1">Involved in urease metallocenter assembly. Binds nickel. Probably functions as a nickel donor during metallocenter assembly.</text>
</comment>
<comment type="subcellular location">
    <subcellularLocation>
        <location evidence="1">Cytoplasm</location>
    </subcellularLocation>
</comment>
<comment type="similarity">
    <text evidence="1">Belongs to the UreE family.</text>
</comment>
<feature type="chain" id="PRO_1000197450" description="Urease accessory protein UreE">
    <location>
        <begin position="1"/>
        <end position="149"/>
    </location>
</feature>
<sequence>MIKTYVVTHLRKMEEGIPEGLQVVDLPMTSEERTQVRRRLETPSGLVLNLALPTGTVLQPGQILCVVEGVAYRVVAAPEEVLVIYPRSLKEAAQVGHLIGNLHRPIDLSGEVIAILYDAALEERLRNLGLVVVREMRSFAKTPLPGHSH</sequence>
<protein>
    <recommendedName>
        <fullName evidence="1">Urease accessory protein UreE</fullName>
    </recommendedName>
</protein>
<dbReference type="EMBL" id="CP000239">
    <property type="protein sequence ID" value="ABC98820.1"/>
    <property type="molecule type" value="Genomic_DNA"/>
</dbReference>
<dbReference type="RefSeq" id="WP_011429504.1">
    <property type="nucleotide sequence ID" value="NC_007775.1"/>
</dbReference>
<dbReference type="SMR" id="Q2JWN9"/>
<dbReference type="STRING" id="321327.CYA_0604"/>
<dbReference type="KEGG" id="cya:CYA_0604"/>
<dbReference type="eggNOG" id="COG2371">
    <property type="taxonomic scope" value="Bacteria"/>
</dbReference>
<dbReference type="HOGENOM" id="CLU_1692612_0_0_3"/>
<dbReference type="OrthoDB" id="5421304at2"/>
<dbReference type="Proteomes" id="UP000008818">
    <property type="component" value="Chromosome"/>
</dbReference>
<dbReference type="GO" id="GO:0005737">
    <property type="term" value="C:cytoplasm"/>
    <property type="evidence" value="ECO:0007669"/>
    <property type="project" value="UniProtKB-SubCell"/>
</dbReference>
<dbReference type="GO" id="GO:0016151">
    <property type="term" value="F:nickel cation binding"/>
    <property type="evidence" value="ECO:0007669"/>
    <property type="project" value="UniProtKB-UniRule"/>
</dbReference>
<dbReference type="GO" id="GO:0051082">
    <property type="term" value="F:unfolded protein binding"/>
    <property type="evidence" value="ECO:0007669"/>
    <property type="project" value="UniProtKB-UniRule"/>
</dbReference>
<dbReference type="GO" id="GO:0006457">
    <property type="term" value="P:protein folding"/>
    <property type="evidence" value="ECO:0007669"/>
    <property type="project" value="InterPro"/>
</dbReference>
<dbReference type="GO" id="GO:0065003">
    <property type="term" value="P:protein-containing complex assembly"/>
    <property type="evidence" value="ECO:0007669"/>
    <property type="project" value="InterPro"/>
</dbReference>
<dbReference type="GO" id="GO:0019627">
    <property type="term" value="P:urea metabolic process"/>
    <property type="evidence" value="ECO:0007669"/>
    <property type="project" value="InterPro"/>
</dbReference>
<dbReference type="Gene3D" id="2.60.260.20">
    <property type="entry name" value="Urease metallochaperone UreE, N-terminal domain"/>
    <property type="match status" value="1"/>
</dbReference>
<dbReference type="Gene3D" id="3.30.70.790">
    <property type="entry name" value="UreE, C-terminal domain"/>
    <property type="match status" value="1"/>
</dbReference>
<dbReference type="HAMAP" id="MF_00822">
    <property type="entry name" value="UreE"/>
    <property type="match status" value="1"/>
</dbReference>
<dbReference type="InterPro" id="IPR012406">
    <property type="entry name" value="UreE"/>
</dbReference>
<dbReference type="InterPro" id="IPR007864">
    <property type="entry name" value="UreE_C_dom"/>
</dbReference>
<dbReference type="InterPro" id="IPR004029">
    <property type="entry name" value="UreE_N"/>
</dbReference>
<dbReference type="InterPro" id="IPR036118">
    <property type="entry name" value="UreE_N_sf"/>
</dbReference>
<dbReference type="NCBIfam" id="NF009756">
    <property type="entry name" value="PRK13261.2-2"/>
    <property type="match status" value="1"/>
</dbReference>
<dbReference type="Pfam" id="PF05194">
    <property type="entry name" value="UreE_C"/>
    <property type="match status" value="1"/>
</dbReference>
<dbReference type="Pfam" id="PF02814">
    <property type="entry name" value="UreE_N"/>
    <property type="match status" value="1"/>
</dbReference>
<dbReference type="PIRSF" id="PIRSF036402">
    <property type="entry name" value="Ureas_acces_UreE"/>
    <property type="match status" value="1"/>
</dbReference>
<dbReference type="SMART" id="SM00988">
    <property type="entry name" value="UreE_N"/>
    <property type="match status" value="1"/>
</dbReference>
<dbReference type="SUPFAM" id="SSF69737">
    <property type="entry name" value="Urease metallochaperone UreE, C-terminal domain"/>
    <property type="match status" value="1"/>
</dbReference>
<dbReference type="SUPFAM" id="SSF69287">
    <property type="entry name" value="Urease metallochaperone UreE, N-terminal domain"/>
    <property type="match status" value="1"/>
</dbReference>
<organism>
    <name type="scientific">Synechococcus sp. (strain JA-3-3Ab)</name>
    <name type="common">Cyanobacteria bacterium Yellowstone A-Prime</name>
    <dbReference type="NCBI Taxonomy" id="321327"/>
    <lineage>
        <taxon>Bacteria</taxon>
        <taxon>Bacillati</taxon>
        <taxon>Cyanobacteriota</taxon>
        <taxon>Cyanophyceae</taxon>
        <taxon>Synechococcales</taxon>
        <taxon>Synechococcaceae</taxon>
        <taxon>Synechococcus</taxon>
    </lineage>
</organism>
<reference key="1">
    <citation type="journal article" date="2007" name="ISME J.">
        <title>Population level functional diversity in a microbial community revealed by comparative genomic and metagenomic analyses.</title>
        <authorList>
            <person name="Bhaya D."/>
            <person name="Grossman A.R."/>
            <person name="Steunou A.-S."/>
            <person name="Khuri N."/>
            <person name="Cohan F.M."/>
            <person name="Hamamura N."/>
            <person name="Melendrez M.C."/>
            <person name="Bateson M.M."/>
            <person name="Ward D.M."/>
            <person name="Heidelberg J.F."/>
        </authorList>
    </citation>
    <scope>NUCLEOTIDE SEQUENCE [LARGE SCALE GENOMIC DNA]</scope>
    <source>
        <strain>JA-3-3Ab</strain>
    </source>
</reference>
<gene>
    <name evidence="1" type="primary">ureE</name>
    <name type="ordered locus">CYA_0604</name>
</gene>
<proteinExistence type="inferred from homology"/>